<comment type="function">
    <text evidence="1">With CysN forms the ATP sulfurylase (ATPS) that catalyzes the adenylation of sulfate producing adenosine 5'-phosphosulfate (APS) and diphosphate, the first enzymatic step in sulfur assimilation pathway. APS synthesis involves the formation of a high-energy phosphoric-sulfuric acid anhydride bond driven by GTP hydrolysis by CysN coupled to ATP hydrolysis by CysD.</text>
</comment>
<comment type="catalytic activity">
    <reaction evidence="1">
        <text>sulfate + ATP + H(+) = adenosine 5'-phosphosulfate + diphosphate</text>
        <dbReference type="Rhea" id="RHEA:18133"/>
        <dbReference type="ChEBI" id="CHEBI:15378"/>
        <dbReference type="ChEBI" id="CHEBI:16189"/>
        <dbReference type="ChEBI" id="CHEBI:30616"/>
        <dbReference type="ChEBI" id="CHEBI:33019"/>
        <dbReference type="ChEBI" id="CHEBI:58243"/>
        <dbReference type="EC" id="2.7.7.4"/>
    </reaction>
</comment>
<comment type="pathway">
    <text evidence="1">Sulfur metabolism; hydrogen sulfide biosynthesis; sulfite from sulfate: step 1/3.</text>
</comment>
<comment type="subunit">
    <text evidence="1">Heterodimer composed of CysD, the smaller subunit, and CysN.</text>
</comment>
<comment type="similarity">
    <text evidence="1">Belongs to the PAPS reductase family. CysD subfamily.</text>
</comment>
<sequence length="302" mass="35514">MFKKNTTHLRQLESESIYIMREVMSDFQNPVMLYSIGKDSSVMLHLAKKSFYPGTIPFPLLHIDTGWKFKEMYIFRDHIASTSNIELIVHSHSKGKLLGLNPFENGGSKYTDIMKTEGLKEAINKYNFDAAFGGARRDEEKSRSKERIYSFRDSLHQWDPKKQRPELWWNYNGQINKGENIRVFPLSNWTELDIWQYIFLEKIEIVPLYFAAKRPVLERNGVLTVIDDSRMKIKSNEVIKEKMVRFRTLGCWPLTNAIESEARNVEDIIKETLIVKTSERTGRAIDYDQKSSMEFKKRQGYF</sequence>
<gene>
    <name evidence="1" type="primary">cysD</name>
    <name type="ordered locus">BUAP5A_417</name>
</gene>
<accession>B8D9K2</accession>
<evidence type="ECO:0000255" key="1">
    <source>
        <dbReference type="HAMAP-Rule" id="MF_00064"/>
    </source>
</evidence>
<reference key="1">
    <citation type="journal article" date="2009" name="Science">
        <title>The dynamics and time scale of ongoing genomic erosion in symbiotic bacteria.</title>
        <authorList>
            <person name="Moran N.A."/>
            <person name="McLaughlin H.J."/>
            <person name="Sorek R."/>
        </authorList>
    </citation>
    <scope>NUCLEOTIDE SEQUENCE [LARGE SCALE GENOMIC DNA]</scope>
    <source>
        <strain>5A</strain>
    </source>
</reference>
<name>CYSD_BUCA5</name>
<protein>
    <recommendedName>
        <fullName evidence="1">Sulfate adenylyltransferase subunit 2</fullName>
        <ecNumber evidence="1">2.7.7.4</ecNumber>
    </recommendedName>
    <alternativeName>
        <fullName evidence="1">ATP-sulfurylase small subunit</fullName>
    </alternativeName>
    <alternativeName>
        <fullName evidence="1">Sulfate adenylate transferase</fullName>
        <shortName evidence="1">SAT</shortName>
    </alternativeName>
</protein>
<organism>
    <name type="scientific">Buchnera aphidicola subsp. Acyrthosiphon pisum (strain 5A)</name>
    <dbReference type="NCBI Taxonomy" id="563178"/>
    <lineage>
        <taxon>Bacteria</taxon>
        <taxon>Pseudomonadati</taxon>
        <taxon>Pseudomonadota</taxon>
        <taxon>Gammaproteobacteria</taxon>
        <taxon>Enterobacterales</taxon>
        <taxon>Erwiniaceae</taxon>
        <taxon>Buchnera</taxon>
    </lineage>
</organism>
<feature type="chain" id="PRO_1000117937" description="Sulfate adenylyltransferase subunit 2">
    <location>
        <begin position="1"/>
        <end position="302"/>
    </location>
</feature>
<proteinExistence type="inferred from homology"/>
<keyword id="KW-0067">ATP-binding</keyword>
<keyword id="KW-0547">Nucleotide-binding</keyword>
<keyword id="KW-0548">Nucleotidyltransferase</keyword>
<keyword id="KW-0808">Transferase</keyword>
<dbReference type="EC" id="2.7.7.4" evidence="1"/>
<dbReference type="EMBL" id="CP001161">
    <property type="protein sequence ID" value="ACL30773.1"/>
    <property type="molecule type" value="Genomic_DNA"/>
</dbReference>
<dbReference type="RefSeq" id="WP_009874377.1">
    <property type="nucleotide sequence ID" value="NC_011833.1"/>
</dbReference>
<dbReference type="SMR" id="B8D9K2"/>
<dbReference type="KEGG" id="bap:BUAP5A_417"/>
<dbReference type="HOGENOM" id="CLU_043026_0_0_6"/>
<dbReference type="OrthoDB" id="9772604at2"/>
<dbReference type="UniPathway" id="UPA00140">
    <property type="reaction ID" value="UER00204"/>
</dbReference>
<dbReference type="Proteomes" id="UP000006904">
    <property type="component" value="Chromosome"/>
</dbReference>
<dbReference type="GO" id="GO:0005524">
    <property type="term" value="F:ATP binding"/>
    <property type="evidence" value="ECO:0007669"/>
    <property type="project" value="UniProtKB-KW"/>
</dbReference>
<dbReference type="GO" id="GO:0004781">
    <property type="term" value="F:sulfate adenylyltransferase (ATP) activity"/>
    <property type="evidence" value="ECO:0007669"/>
    <property type="project" value="UniProtKB-UniRule"/>
</dbReference>
<dbReference type="GO" id="GO:0070814">
    <property type="term" value="P:hydrogen sulfide biosynthetic process"/>
    <property type="evidence" value="ECO:0007669"/>
    <property type="project" value="UniProtKB-UniRule"/>
</dbReference>
<dbReference type="GO" id="GO:0000103">
    <property type="term" value="P:sulfate assimilation"/>
    <property type="evidence" value="ECO:0007669"/>
    <property type="project" value="UniProtKB-UniRule"/>
</dbReference>
<dbReference type="FunFam" id="3.40.50.620:FF:000002">
    <property type="entry name" value="Sulfate adenylyltransferase subunit 2"/>
    <property type="match status" value="1"/>
</dbReference>
<dbReference type="Gene3D" id="3.40.50.620">
    <property type="entry name" value="HUPs"/>
    <property type="match status" value="1"/>
</dbReference>
<dbReference type="HAMAP" id="MF_00064">
    <property type="entry name" value="Sulf_adenylyltr_sub2"/>
    <property type="match status" value="1"/>
</dbReference>
<dbReference type="InterPro" id="IPR002500">
    <property type="entry name" value="PAPS_reduct_dom"/>
</dbReference>
<dbReference type="InterPro" id="IPR014729">
    <property type="entry name" value="Rossmann-like_a/b/a_fold"/>
</dbReference>
<dbReference type="InterPro" id="IPR011784">
    <property type="entry name" value="SO4_adenylTrfase_ssu"/>
</dbReference>
<dbReference type="InterPro" id="IPR050128">
    <property type="entry name" value="Sulfate_adenylyltrnsfr_sub2"/>
</dbReference>
<dbReference type="NCBIfam" id="TIGR02039">
    <property type="entry name" value="CysD"/>
    <property type="match status" value="1"/>
</dbReference>
<dbReference type="NCBIfam" id="NF003587">
    <property type="entry name" value="PRK05253.1"/>
    <property type="match status" value="1"/>
</dbReference>
<dbReference type="NCBIfam" id="NF009214">
    <property type="entry name" value="PRK12563.1"/>
    <property type="match status" value="1"/>
</dbReference>
<dbReference type="PANTHER" id="PTHR43196">
    <property type="entry name" value="SULFATE ADENYLYLTRANSFERASE SUBUNIT 2"/>
    <property type="match status" value="1"/>
</dbReference>
<dbReference type="PANTHER" id="PTHR43196:SF1">
    <property type="entry name" value="SULFATE ADENYLYLTRANSFERASE SUBUNIT 2"/>
    <property type="match status" value="1"/>
</dbReference>
<dbReference type="Pfam" id="PF01507">
    <property type="entry name" value="PAPS_reduct"/>
    <property type="match status" value="1"/>
</dbReference>
<dbReference type="PIRSF" id="PIRSF002936">
    <property type="entry name" value="CysDAde_trans"/>
    <property type="match status" value="1"/>
</dbReference>
<dbReference type="SUPFAM" id="SSF52402">
    <property type="entry name" value="Adenine nucleotide alpha hydrolases-like"/>
    <property type="match status" value="1"/>
</dbReference>